<gene>
    <name type="primary">glnQ</name>
</gene>
<name>GLNQ_GEOSE</name>
<comment type="function">
    <text>Part of the binding-protein-dependent transport system for glutamine. Probably responsible for energy coupling to the transport system.</text>
</comment>
<comment type="subcellular location">
    <subcellularLocation>
        <location evidence="2">Cell membrane</location>
        <topology evidence="2">Peripheral membrane protein</topology>
    </subcellularLocation>
</comment>
<comment type="induction">
    <text>By lack of glutamine.</text>
</comment>
<comment type="similarity">
    <text evidence="2">Belongs to the ABC transporter superfamily.</text>
</comment>
<dbReference type="EMBL" id="M61017">
    <property type="protein sequence ID" value="AAA22483.1"/>
    <property type="molecule type" value="Genomic_DNA"/>
</dbReference>
<dbReference type="PIR" id="A42478">
    <property type="entry name" value="A42478"/>
</dbReference>
<dbReference type="SMR" id="P27675"/>
<dbReference type="GO" id="GO:0005886">
    <property type="term" value="C:plasma membrane"/>
    <property type="evidence" value="ECO:0007669"/>
    <property type="project" value="UniProtKB-SubCell"/>
</dbReference>
<dbReference type="GO" id="GO:0015424">
    <property type="term" value="F:ABC-type amino acid transporter activity"/>
    <property type="evidence" value="ECO:0007669"/>
    <property type="project" value="InterPro"/>
</dbReference>
<dbReference type="GO" id="GO:0005524">
    <property type="term" value="F:ATP binding"/>
    <property type="evidence" value="ECO:0007669"/>
    <property type="project" value="UniProtKB-KW"/>
</dbReference>
<dbReference type="GO" id="GO:0016887">
    <property type="term" value="F:ATP hydrolysis activity"/>
    <property type="evidence" value="ECO:0007669"/>
    <property type="project" value="InterPro"/>
</dbReference>
<dbReference type="CDD" id="cd03262">
    <property type="entry name" value="ABC_HisP_GlnQ"/>
    <property type="match status" value="1"/>
</dbReference>
<dbReference type="FunFam" id="3.40.50.300:FF:000020">
    <property type="entry name" value="Amino acid ABC transporter ATP-binding component"/>
    <property type="match status" value="1"/>
</dbReference>
<dbReference type="Gene3D" id="3.40.50.300">
    <property type="entry name" value="P-loop containing nucleotide triphosphate hydrolases"/>
    <property type="match status" value="1"/>
</dbReference>
<dbReference type="InterPro" id="IPR003593">
    <property type="entry name" value="AAA+_ATPase"/>
</dbReference>
<dbReference type="InterPro" id="IPR030679">
    <property type="entry name" value="ABC_ATPase_HisP-typ"/>
</dbReference>
<dbReference type="InterPro" id="IPR003439">
    <property type="entry name" value="ABC_transporter-like_ATP-bd"/>
</dbReference>
<dbReference type="InterPro" id="IPR017871">
    <property type="entry name" value="ABC_transporter-like_CS"/>
</dbReference>
<dbReference type="InterPro" id="IPR050086">
    <property type="entry name" value="MetN_ABC_transporter-like"/>
</dbReference>
<dbReference type="InterPro" id="IPR027417">
    <property type="entry name" value="P-loop_NTPase"/>
</dbReference>
<dbReference type="PANTHER" id="PTHR43166">
    <property type="entry name" value="AMINO ACID IMPORT ATP-BINDING PROTEIN"/>
    <property type="match status" value="1"/>
</dbReference>
<dbReference type="PANTHER" id="PTHR43166:SF4">
    <property type="entry name" value="PHOSPHONATES IMPORT ATP-BINDING PROTEIN PHNC"/>
    <property type="match status" value="1"/>
</dbReference>
<dbReference type="Pfam" id="PF00005">
    <property type="entry name" value="ABC_tran"/>
    <property type="match status" value="1"/>
</dbReference>
<dbReference type="PIRSF" id="PIRSF039085">
    <property type="entry name" value="ABC_ATPase_HisP"/>
    <property type="match status" value="1"/>
</dbReference>
<dbReference type="SMART" id="SM00382">
    <property type="entry name" value="AAA"/>
    <property type="match status" value="1"/>
</dbReference>
<dbReference type="SUPFAM" id="SSF52540">
    <property type="entry name" value="P-loop containing nucleoside triphosphate hydrolases"/>
    <property type="match status" value="1"/>
</dbReference>
<dbReference type="PROSITE" id="PS00211">
    <property type="entry name" value="ABC_TRANSPORTER_1"/>
    <property type="match status" value="1"/>
</dbReference>
<dbReference type="PROSITE" id="PS50893">
    <property type="entry name" value="ABC_TRANSPORTER_2"/>
    <property type="match status" value="1"/>
</dbReference>
<feature type="chain" id="PRO_0000092333" description="Glutamine transport ATP-binding protein GlnQ">
    <location>
        <begin position="1"/>
        <end position="242"/>
    </location>
</feature>
<feature type="domain" description="ABC transporter" evidence="1">
    <location>
        <begin position="2"/>
        <end position="236"/>
    </location>
</feature>
<feature type="binding site" evidence="1">
    <location>
        <begin position="34"/>
        <end position="41"/>
    </location>
    <ligand>
        <name>ATP</name>
        <dbReference type="ChEBI" id="CHEBI:30616"/>
    </ligand>
</feature>
<keyword id="KW-0029">Amino-acid transport</keyword>
<keyword id="KW-0067">ATP-binding</keyword>
<keyword id="KW-1003">Cell membrane</keyword>
<keyword id="KW-0472">Membrane</keyword>
<keyword id="KW-0547">Nucleotide-binding</keyword>
<keyword id="KW-0813">Transport</keyword>
<evidence type="ECO:0000255" key="1">
    <source>
        <dbReference type="PROSITE-ProRule" id="PRU00434"/>
    </source>
</evidence>
<evidence type="ECO:0000305" key="2"/>
<organism>
    <name type="scientific">Geobacillus stearothermophilus</name>
    <name type="common">Bacillus stearothermophilus</name>
    <dbReference type="NCBI Taxonomy" id="1422"/>
    <lineage>
        <taxon>Bacteria</taxon>
        <taxon>Bacillati</taxon>
        <taxon>Bacillota</taxon>
        <taxon>Bacilli</taxon>
        <taxon>Bacillales</taxon>
        <taxon>Anoxybacillaceae</taxon>
        <taxon>Geobacillus</taxon>
    </lineage>
</organism>
<reference key="1">
    <citation type="journal article" date="1991" name="J. Bacteriol.">
        <title>Cloning and characterization of a glutamine transport operon of Bacillus stearothermophilus NUB36: effect of temperature on regulation of transcription.</title>
        <authorList>
            <person name="Wu L."/>
            <person name="Welker N.E."/>
        </authorList>
    </citation>
    <scope>NUCLEOTIDE SEQUENCE [GENOMIC DNA]</scope>
    <source>
        <strain>NUB36</strain>
    </source>
</reference>
<protein>
    <recommendedName>
        <fullName>Glutamine transport ATP-binding protein GlnQ</fullName>
    </recommendedName>
</protein>
<proteinExistence type="evidence at transcript level"/>
<accession>P27675</accession>
<sequence length="242" mass="27436">MIYFHQVNKYYGDFHVLKDINLTIHQGEVVVIIGPSGSGKSTLVRCINRLETISSGELIVDNVKVNDKHIDINQLRRNIGMVFQHFNLYPHMTVLQNITLAPMKVLRIPEKEAKETAMYYLEKVGIPDKANAYPSELSGGQQQRVAIARGLAMKPKIMLFDEPTSALDPETIGEVLDVMKQLAKEGMTMVVVTHEMGFAREVADRIVFMDQGRILEEAPPEEFFSNPKEERAKVFLSRILNH</sequence>